<protein>
    <recommendedName>
        <fullName evidence="1">UPF0102 protein CLD_2200</fullName>
    </recommendedName>
</protein>
<organism>
    <name type="scientific">Clostridium botulinum (strain Okra / Type B1)</name>
    <dbReference type="NCBI Taxonomy" id="498213"/>
    <lineage>
        <taxon>Bacteria</taxon>
        <taxon>Bacillati</taxon>
        <taxon>Bacillota</taxon>
        <taxon>Clostridia</taxon>
        <taxon>Eubacteriales</taxon>
        <taxon>Clostridiaceae</taxon>
        <taxon>Clostridium</taxon>
    </lineage>
</organism>
<comment type="similarity">
    <text evidence="1">Belongs to the UPF0102 family.</text>
</comment>
<sequence length="123" mass="14514">MHYCNKDIGSFGETIAVDYIKNCGYIILERNFRCKLGEIDIIAKDKNFIVFIEVKTRYSYIYGSPSEAITFRKQNKIYKTAQLYIIKKAIHNKFYFRFDVIEVILNTLNSNYSVKLIKNAFQI</sequence>
<evidence type="ECO:0000255" key="1">
    <source>
        <dbReference type="HAMAP-Rule" id="MF_00048"/>
    </source>
</evidence>
<gene>
    <name type="ordered locus">CLD_2200</name>
</gene>
<feature type="chain" id="PRO_1000091233" description="UPF0102 protein CLD_2200">
    <location>
        <begin position="1"/>
        <end position="123"/>
    </location>
</feature>
<proteinExistence type="inferred from homology"/>
<reference key="1">
    <citation type="journal article" date="2007" name="PLoS ONE">
        <title>Analysis of the neurotoxin complex genes in Clostridium botulinum A1-A4 and B1 strains: BoNT/A3, /Ba4 and /B1 clusters are located within plasmids.</title>
        <authorList>
            <person name="Smith T.J."/>
            <person name="Hill K.K."/>
            <person name="Foley B.T."/>
            <person name="Detter J.C."/>
            <person name="Munk A.C."/>
            <person name="Bruce D.C."/>
            <person name="Doggett N.A."/>
            <person name="Smith L.A."/>
            <person name="Marks J.D."/>
            <person name="Xie G."/>
            <person name="Brettin T.S."/>
        </authorList>
    </citation>
    <scope>NUCLEOTIDE SEQUENCE [LARGE SCALE GENOMIC DNA]</scope>
    <source>
        <strain>Okra / Type B1</strain>
    </source>
</reference>
<dbReference type="EMBL" id="CP000939">
    <property type="protein sequence ID" value="ACA44759.1"/>
    <property type="molecule type" value="Genomic_DNA"/>
</dbReference>
<dbReference type="RefSeq" id="WP_003384683.1">
    <property type="nucleotide sequence ID" value="NC_010516.1"/>
</dbReference>
<dbReference type="SMR" id="B1II71"/>
<dbReference type="KEGG" id="cbb:CLD_2200"/>
<dbReference type="HOGENOM" id="CLU_115353_2_1_9"/>
<dbReference type="Proteomes" id="UP000008541">
    <property type="component" value="Chromosome"/>
</dbReference>
<dbReference type="GO" id="GO:0003676">
    <property type="term" value="F:nucleic acid binding"/>
    <property type="evidence" value="ECO:0007669"/>
    <property type="project" value="InterPro"/>
</dbReference>
<dbReference type="CDD" id="cd20736">
    <property type="entry name" value="PoNe_Nuclease"/>
    <property type="match status" value="1"/>
</dbReference>
<dbReference type="Gene3D" id="3.40.1350.10">
    <property type="match status" value="1"/>
</dbReference>
<dbReference type="HAMAP" id="MF_00048">
    <property type="entry name" value="UPF0102"/>
    <property type="match status" value="1"/>
</dbReference>
<dbReference type="InterPro" id="IPR011335">
    <property type="entry name" value="Restrct_endonuc-II-like"/>
</dbReference>
<dbReference type="InterPro" id="IPR011856">
    <property type="entry name" value="tRNA_endonuc-like_dom_sf"/>
</dbReference>
<dbReference type="InterPro" id="IPR003509">
    <property type="entry name" value="UPF0102_YraN-like"/>
</dbReference>
<dbReference type="NCBIfam" id="NF009150">
    <property type="entry name" value="PRK12497.1-3"/>
    <property type="match status" value="1"/>
</dbReference>
<dbReference type="NCBIfam" id="NF009154">
    <property type="entry name" value="PRK12497.3-3"/>
    <property type="match status" value="1"/>
</dbReference>
<dbReference type="NCBIfam" id="TIGR00252">
    <property type="entry name" value="YraN family protein"/>
    <property type="match status" value="1"/>
</dbReference>
<dbReference type="PANTHER" id="PTHR34039">
    <property type="entry name" value="UPF0102 PROTEIN YRAN"/>
    <property type="match status" value="1"/>
</dbReference>
<dbReference type="PANTHER" id="PTHR34039:SF1">
    <property type="entry name" value="UPF0102 PROTEIN YRAN"/>
    <property type="match status" value="1"/>
</dbReference>
<dbReference type="Pfam" id="PF02021">
    <property type="entry name" value="UPF0102"/>
    <property type="match status" value="1"/>
</dbReference>
<dbReference type="SUPFAM" id="SSF52980">
    <property type="entry name" value="Restriction endonuclease-like"/>
    <property type="match status" value="1"/>
</dbReference>
<name>Y2200_CLOBK</name>
<accession>B1II71</accession>